<comment type="function">
    <text evidence="1">Part of a membrane-bound complex that couples electron transfer with translocation of ions across the membrane. Required to maintain the reduced state of SoxR.</text>
</comment>
<comment type="cofactor">
    <cofactor evidence="1">
        <name>[4Fe-4S] cluster</name>
        <dbReference type="ChEBI" id="CHEBI:49883"/>
    </cofactor>
    <text evidence="1">Binds 2 [4Fe-4S] clusters per subunit.</text>
</comment>
<comment type="subunit">
    <text evidence="1">The complex is composed of six subunits: RsxA, RsxB, RsxC, RsxD, RsxE and RsxG.</text>
</comment>
<comment type="subcellular location">
    <subcellularLocation>
        <location evidence="1">Cell inner membrane</location>
        <topology evidence="1">Peripheral membrane protein</topology>
    </subcellularLocation>
</comment>
<comment type="similarity">
    <text evidence="1">Belongs to the 4Fe4S bacterial-type ferredoxin family. RnfC subfamily.</text>
</comment>
<accession>B7NU04</accession>
<keyword id="KW-0004">4Fe-4S</keyword>
<keyword id="KW-0997">Cell inner membrane</keyword>
<keyword id="KW-1003">Cell membrane</keyword>
<keyword id="KW-0249">Electron transport</keyword>
<keyword id="KW-0408">Iron</keyword>
<keyword id="KW-0411">Iron-sulfur</keyword>
<keyword id="KW-0472">Membrane</keyword>
<keyword id="KW-0479">Metal-binding</keyword>
<keyword id="KW-0677">Repeat</keyword>
<keyword id="KW-1278">Translocase</keyword>
<keyword id="KW-0813">Transport</keyword>
<reference key="1">
    <citation type="journal article" date="2009" name="PLoS Genet.">
        <title>Organised genome dynamics in the Escherichia coli species results in highly diverse adaptive paths.</title>
        <authorList>
            <person name="Touchon M."/>
            <person name="Hoede C."/>
            <person name="Tenaillon O."/>
            <person name="Barbe V."/>
            <person name="Baeriswyl S."/>
            <person name="Bidet P."/>
            <person name="Bingen E."/>
            <person name="Bonacorsi S."/>
            <person name="Bouchier C."/>
            <person name="Bouvet O."/>
            <person name="Calteau A."/>
            <person name="Chiapello H."/>
            <person name="Clermont O."/>
            <person name="Cruveiller S."/>
            <person name="Danchin A."/>
            <person name="Diard M."/>
            <person name="Dossat C."/>
            <person name="Karoui M.E."/>
            <person name="Frapy E."/>
            <person name="Garry L."/>
            <person name="Ghigo J.M."/>
            <person name="Gilles A.M."/>
            <person name="Johnson J."/>
            <person name="Le Bouguenec C."/>
            <person name="Lescat M."/>
            <person name="Mangenot S."/>
            <person name="Martinez-Jehanne V."/>
            <person name="Matic I."/>
            <person name="Nassif X."/>
            <person name="Oztas S."/>
            <person name="Petit M.A."/>
            <person name="Pichon C."/>
            <person name="Rouy Z."/>
            <person name="Ruf C.S."/>
            <person name="Schneider D."/>
            <person name="Tourret J."/>
            <person name="Vacherie B."/>
            <person name="Vallenet D."/>
            <person name="Medigue C."/>
            <person name="Rocha E.P.C."/>
            <person name="Denamur E."/>
        </authorList>
    </citation>
    <scope>NUCLEOTIDE SEQUENCE [LARGE SCALE GENOMIC DNA]</scope>
    <source>
        <strain>IAI39 / ExPEC</strain>
    </source>
</reference>
<organism>
    <name type="scientific">Escherichia coli O7:K1 (strain IAI39 / ExPEC)</name>
    <dbReference type="NCBI Taxonomy" id="585057"/>
    <lineage>
        <taxon>Bacteria</taxon>
        <taxon>Pseudomonadati</taxon>
        <taxon>Pseudomonadota</taxon>
        <taxon>Gammaproteobacteria</taxon>
        <taxon>Enterobacterales</taxon>
        <taxon>Enterobacteriaceae</taxon>
        <taxon>Escherichia</taxon>
    </lineage>
</organism>
<proteinExistence type="inferred from homology"/>
<sequence length="740" mass="80239">MLKLFSAFRKNKIWDFNGGIHPPEMKTQSNGTPLRQVPLAQRFVIPLKQHIGAEGELCVSVGDKVLRGQPLTRGRGKMLPVHAPTSGTVTAIAPHSTAHPSALAELSVIIDADGEDCWIPRDGWDDYRSRSREELIERIHKFGVAGLGGAGFPTGVKLQGGGDKIETLIINAAECEPYITADDRLMQDCAAQVVEGIRILAHILQPREILIGIEDNKPQAISMLRAVLADSHDISLRVIPTKYPSGGAKQLTYILTGKQVPHGGRSSDIGVLMQNVGTAYAVKRAVIDGEPITERVVTLTGEAIARPGNVWARLGTPVRHLLNDAGFCPSADQMVIMGGPLMGFTLPWLDVPVVKITNCLLAPSANELGEPQEEQSCIRCSACADACPADLLPQQLYWFSKGQQHDKATTHNIADCIECGACAWVCPSNIPLVQYFRQEKAEIAAIRQEEKRAAEAKARFEARQARLEREKAARLERHKSAAVQPAAKDKDAIAAALARVKEKQAQATQPIVIKAGERPDNSAIIAAREARKAQARAKQAKLQQTNDAATVADPRKTAVEAAIARAKARKLEQQQANAEPEQQVDPRKAAVEAAIARAKARKLEQQQANAEPEQQVDPRKAAVEAAIARAKARKLEQQQANAEPEQQVDPRKAAVEAAIARAKARKLEQQQANAEPEEQVDPRKAAVEAAIARAKARKLEQKQANAVPEEQVDPRKAAVAAAIARVQAKKAAQQKVVNED</sequence>
<name>RSXC_ECO7I</name>
<gene>
    <name evidence="1" type="primary">rsxC</name>
    <name type="ordered locus">ECIAI39_1427</name>
</gene>
<evidence type="ECO:0000255" key="1">
    <source>
        <dbReference type="HAMAP-Rule" id="MF_00461"/>
    </source>
</evidence>
<evidence type="ECO:0000256" key="2">
    <source>
        <dbReference type="SAM" id="MobiDB-lite"/>
    </source>
</evidence>
<dbReference type="EC" id="7.-.-.-" evidence="1"/>
<dbReference type="EMBL" id="CU928164">
    <property type="protein sequence ID" value="CAR17560.1"/>
    <property type="molecule type" value="Genomic_DNA"/>
</dbReference>
<dbReference type="RefSeq" id="WP_000915802.1">
    <property type="nucleotide sequence ID" value="NC_011750.1"/>
</dbReference>
<dbReference type="RefSeq" id="YP_002407432.1">
    <property type="nucleotide sequence ID" value="NC_011750.1"/>
</dbReference>
<dbReference type="SMR" id="B7NU04"/>
<dbReference type="STRING" id="585057.ECIAI39_1427"/>
<dbReference type="KEGG" id="ect:ECIAI39_1427"/>
<dbReference type="PATRIC" id="fig|585057.6.peg.1493"/>
<dbReference type="HOGENOM" id="CLU_010808_2_1_6"/>
<dbReference type="Proteomes" id="UP000000749">
    <property type="component" value="Chromosome"/>
</dbReference>
<dbReference type="GO" id="GO:0005886">
    <property type="term" value="C:plasma membrane"/>
    <property type="evidence" value="ECO:0007669"/>
    <property type="project" value="UniProtKB-SubCell"/>
</dbReference>
<dbReference type="GO" id="GO:0051539">
    <property type="term" value="F:4 iron, 4 sulfur cluster binding"/>
    <property type="evidence" value="ECO:0007669"/>
    <property type="project" value="UniProtKB-KW"/>
</dbReference>
<dbReference type="GO" id="GO:0009055">
    <property type="term" value="F:electron transfer activity"/>
    <property type="evidence" value="ECO:0007669"/>
    <property type="project" value="InterPro"/>
</dbReference>
<dbReference type="GO" id="GO:0046872">
    <property type="term" value="F:metal ion binding"/>
    <property type="evidence" value="ECO:0007669"/>
    <property type="project" value="UniProtKB-KW"/>
</dbReference>
<dbReference type="GO" id="GO:0022900">
    <property type="term" value="P:electron transport chain"/>
    <property type="evidence" value="ECO:0007669"/>
    <property type="project" value="UniProtKB-UniRule"/>
</dbReference>
<dbReference type="Gene3D" id="3.30.70.20">
    <property type="match status" value="1"/>
</dbReference>
<dbReference type="Gene3D" id="3.40.50.11540">
    <property type="entry name" value="NADH-ubiquinone oxidoreductase 51kDa subunit"/>
    <property type="match status" value="1"/>
</dbReference>
<dbReference type="HAMAP" id="MF_00461">
    <property type="entry name" value="RsxC_RnfC"/>
    <property type="match status" value="1"/>
</dbReference>
<dbReference type="InterPro" id="IPR017896">
    <property type="entry name" value="4Fe4S_Fe-S-bd"/>
</dbReference>
<dbReference type="InterPro" id="IPR017900">
    <property type="entry name" value="4Fe4S_Fe_S_CS"/>
</dbReference>
<dbReference type="InterPro" id="IPR010208">
    <property type="entry name" value="Ion_transpt_RnfC/RsxC"/>
</dbReference>
<dbReference type="InterPro" id="IPR011538">
    <property type="entry name" value="Nuo51_FMN-bd"/>
</dbReference>
<dbReference type="InterPro" id="IPR037225">
    <property type="entry name" value="Nuo51_FMN-bd_sf"/>
</dbReference>
<dbReference type="InterPro" id="IPR026902">
    <property type="entry name" value="RnfC_N"/>
</dbReference>
<dbReference type="InterPro" id="IPR019554">
    <property type="entry name" value="Soluble_ligand-bd"/>
</dbReference>
<dbReference type="NCBIfam" id="NF003454">
    <property type="entry name" value="PRK05035.1"/>
    <property type="match status" value="1"/>
</dbReference>
<dbReference type="NCBIfam" id="TIGR01945">
    <property type="entry name" value="rnfC"/>
    <property type="match status" value="1"/>
</dbReference>
<dbReference type="PANTHER" id="PTHR43034">
    <property type="entry name" value="ION-TRANSLOCATING OXIDOREDUCTASE COMPLEX SUBUNIT C"/>
    <property type="match status" value="1"/>
</dbReference>
<dbReference type="PANTHER" id="PTHR43034:SF2">
    <property type="entry name" value="ION-TRANSLOCATING OXIDOREDUCTASE COMPLEX SUBUNIT C"/>
    <property type="match status" value="1"/>
</dbReference>
<dbReference type="Pfam" id="PF01512">
    <property type="entry name" value="Complex1_51K"/>
    <property type="match status" value="1"/>
</dbReference>
<dbReference type="Pfam" id="PF12838">
    <property type="entry name" value="Fer4_7"/>
    <property type="match status" value="1"/>
</dbReference>
<dbReference type="Pfam" id="PF13375">
    <property type="entry name" value="RnfC_N"/>
    <property type="match status" value="1"/>
</dbReference>
<dbReference type="Pfam" id="PF10531">
    <property type="entry name" value="SLBB"/>
    <property type="match status" value="1"/>
</dbReference>
<dbReference type="SUPFAM" id="SSF46548">
    <property type="entry name" value="alpha-helical ferredoxin"/>
    <property type="match status" value="1"/>
</dbReference>
<dbReference type="SUPFAM" id="SSF142019">
    <property type="entry name" value="Nqo1 FMN-binding domain-like"/>
    <property type="match status" value="1"/>
</dbReference>
<dbReference type="PROSITE" id="PS00198">
    <property type="entry name" value="4FE4S_FER_1"/>
    <property type="match status" value="2"/>
</dbReference>
<dbReference type="PROSITE" id="PS51379">
    <property type="entry name" value="4FE4S_FER_2"/>
    <property type="match status" value="2"/>
</dbReference>
<protein>
    <recommendedName>
        <fullName evidence="1">Ion-translocating oxidoreductase complex subunit C</fullName>
        <ecNumber evidence="1">7.-.-.-</ecNumber>
    </recommendedName>
    <alternativeName>
        <fullName evidence="1">Rsx electron transport complex subunit C</fullName>
    </alternativeName>
</protein>
<feature type="chain" id="PRO_1000194515" description="Ion-translocating oxidoreductase complex subunit C">
    <location>
        <begin position="1"/>
        <end position="740"/>
    </location>
</feature>
<feature type="domain" description="4Fe-4S ferredoxin-type 1" evidence="1">
    <location>
        <begin position="369"/>
        <end position="397"/>
    </location>
</feature>
<feature type="domain" description="4Fe-4S ferredoxin-type 2" evidence="1">
    <location>
        <begin position="407"/>
        <end position="436"/>
    </location>
</feature>
<feature type="region of interest" description="Disordered" evidence="2">
    <location>
        <begin position="602"/>
        <end position="684"/>
    </location>
</feature>
<feature type="compositionally biased region" description="Low complexity" evidence="2">
    <location>
        <begin position="605"/>
        <end position="615"/>
    </location>
</feature>
<feature type="compositionally biased region" description="Low complexity" evidence="2">
    <location>
        <begin position="637"/>
        <end position="647"/>
    </location>
</feature>
<feature type="binding site" evidence="1">
    <location>
        <position position="377"/>
    </location>
    <ligand>
        <name>[4Fe-4S] cluster</name>
        <dbReference type="ChEBI" id="CHEBI:49883"/>
        <label>1</label>
    </ligand>
</feature>
<feature type="binding site" evidence="1">
    <location>
        <position position="380"/>
    </location>
    <ligand>
        <name>[4Fe-4S] cluster</name>
        <dbReference type="ChEBI" id="CHEBI:49883"/>
        <label>1</label>
    </ligand>
</feature>
<feature type="binding site" evidence="1">
    <location>
        <position position="383"/>
    </location>
    <ligand>
        <name>[4Fe-4S] cluster</name>
        <dbReference type="ChEBI" id="CHEBI:49883"/>
        <label>1</label>
    </ligand>
</feature>
<feature type="binding site" evidence="1">
    <location>
        <position position="387"/>
    </location>
    <ligand>
        <name>[4Fe-4S] cluster</name>
        <dbReference type="ChEBI" id="CHEBI:49883"/>
        <label>2</label>
    </ligand>
</feature>
<feature type="binding site" evidence="1">
    <location>
        <position position="416"/>
    </location>
    <ligand>
        <name>[4Fe-4S] cluster</name>
        <dbReference type="ChEBI" id="CHEBI:49883"/>
        <label>2</label>
    </ligand>
</feature>
<feature type="binding site" evidence="1">
    <location>
        <position position="419"/>
    </location>
    <ligand>
        <name>[4Fe-4S] cluster</name>
        <dbReference type="ChEBI" id="CHEBI:49883"/>
        <label>2</label>
    </ligand>
</feature>
<feature type="binding site" evidence="1">
    <location>
        <position position="422"/>
    </location>
    <ligand>
        <name>[4Fe-4S] cluster</name>
        <dbReference type="ChEBI" id="CHEBI:49883"/>
        <label>2</label>
    </ligand>
</feature>
<feature type="binding site" evidence="1">
    <location>
        <position position="426"/>
    </location>
    <ligand>
        <name>[4Fe-4S] cluster</name>
        <dbReference type="ChEBI" id="CHEBI:49883"/>
        <label>1</label>
    </ligand>
</feature>